<organismHost>
    <name type="scientific">Acanthamoeba polyphaga</name>
    <name type="common">Amoeba</name>
    <dbReference type="NCBI Taxonomy" id="5757"/>
</organismHost>
<name>YR898_MIMIV</name>
<comment type="similarity">
    <text evidence="1">Belongs to the mimivirus L885/R898 family.</text>
</comment>
<gene>
    <name type="ordered locus">MIMI_R898</name>
</gene>
<organism>
    <name type="scientific">Acanthamoeba polyphaga mimivirus</name>
    <name type="common">APMV</name>
    <dbReference type="NCBI Taxonomy" id="212035"/>
    <lineage>
        <taxon>Viruses</taxon>
        <taxon>Varidnaviria</taxon>
        <taxon>Bamfordvirae</taxon>
        <taxon>Nucleocytoviricota</taxon>
        <taxon>Megaviricetes</taxon>
        <taxon>Imitervirales</taxon>
        <taxon>Mimiviridae</taxon>
        <taxon>Megamimivirinae</taxon>
        <taxon>Mimivirus</taxon>
        <taxon>Mimivirus bradfordmassiliense</taxon>
    </lineage>
</organism>
<proteinExistence type="inferred from homology"/>
<sequence length="201" mass="23817">MNELIYFDRKKRLESILNHIKKLDYDDLRQIKKAILQQEFELDFNSCIPIIFETKIKTMKYKSSHDNPNWEYSDGIKCKFKMEFDNDCSIDLYCEYTTYYDGGDLEYTDIDNNRSININIGQKTYTIDFDADNYQTIFVINNDALKLLDSLSIDKSDSNKKCLGILIYNIVGITKPEDYHESFDIMSCDNFDDIVFIYEPY</sequence>
<feature type="chain" id="PRO_0000071389" description="Uncharacterized protein R898">
    <location>
        <begin position="1"/>
        <end position="201"/>
    </location>
</feature>
<keyword id="KW-1185">Reference proteome</keyword>
<dbReference type="EMBL" id="AY653733">
    <property type="protein sequence ID" value="AAV51155.1"/>
    <property type="molecule type" value="Genomic_DNA"/>
</dbReference>
<dbReference type="SMR" id="Q5UQY7"/>
<dbReference type="KEGG" id="vg:9925567"/>
<dbReference type="OrthoDB" id="31616at10239"/>
<dbReference type="Proteomes" id="UP000001134">
    <property type="component" value="Genome"/>
</dbReference>
<dbReference type="InterPro" id="IPR045365">
    <property type="entry name" value="DUF5884"/>
</dbReference>
<dbReference type="Pfam" id="PF19231">
    <property type="entry name" value="DUF5884"/>
    <property type="match status" value="1"/>
</dbReference>
<protein>
    <recommendedName>
        <fullName>Uncharacterized protein R898</fullName>
    </recommendedName>
</protein>
<evidence type="ECO:0000305" key="1"/>
<accession>Q5UQY7</accession>
<reference key="1">
    <citation type="journal article" date="2004" name="Science">
        <title>The 1.2-megabase genome sequence of Mimivirus.</title>
        <authorList>
            <person name="Raoult D."/>
            <person name="Audic S."/>
            <person name="Robert C."/>
            <person name="Abergel C."/>
            <person name="Renesto P."/>
            <person name="Ogata H."/>
            <person name="La Scola B."/>
            <person name="Susan M."/>
            <person name="Claverie J.-M."/>
        </authorList>
    </citation>
    <scope>NUCLEOTIDE SEQUENCE [LARGE SCALE GENOMIC DNA]</scope>
    <source>
        <strain>Rowbotham-Bradford</strain>
    </source>
</reference>